<proteinExistence type="inferred from homology"/>
<organism>
    <name type="scientific">Cupriavidus metallidurans (strain ATCC 43123 / DSM 2839 / NBRC 102507 / CH34)</name>
    <name type="common">Ralstonia metallidurans</name>
    <dbReference type="NCBI Taxonomy" id="266264"/>
    <lineage>
        <taxon>Bacteria</taxon>
        <taxon>Pseudomonadati</taxon>
        <taxon>Pseudomonadota</taxon>
        <taxon>Betaproteobacteria</taxon>
        <taxon>Burkholderiales</taxon>
        <taxon>Burkholderiaceae</taxon>
        <taxon>Cupriavidus</taxon>
    </lineage>
</organism>
<accession>Q1LI79</accession>
<gene>
    <name evidence="1" type="primary">cyaY</name>
    <name type="ordered locus">Rmet_3275</name>
</gene>
<feature type="chain" id="PRO_1000010949" description="Iron-sulfur cluster assembly protein CyaY">
    <location>
        <begin position="1"/>
        <end position="111"/>
    </location>
</feature>
<keyword id="KW-0408">Iron</keyword>
<keyword id="KW-0479">Metal-binding</keyword>
<keyword id="KW-1185">Reference proteome</keyword>
<comment type="function">
    <text evidence="1">Involved in iron-sulfur (Fe-S) cluster assembly. May act as a regulator of Fe-S biogenesis.</text>
</comment>
<comment type="similarity">
    <text evidence="1">Belongs to the frataxin family.</text>
</comment>
<evidence type="ECO:0000255" key="1">
    <source>
        <dbReference type="HAMAP-Rule" id="MF_00142"/>
    </source>
</evidence>
<sequence length="111" mass="11805">MPPLSESEFLALASKALDQLEAAIEAAADAADADVEINRTGNVMELEFEDGSKIIVNSQAPMQELWVAAKAGGFHFRNDGSKWVDTRGGGELYAALSGYMSQQAGVTLTLK</sequence>
<dbReference type="EMBL" id="CP000352">
    <property type="protein sequence ID" value="ABF10147.1"/>
    <property type="molecule type" value="Genomic_DNA"/>
</dbReference>
<dbReference type="RefSeq" id="WP_011517748.1">
    <property type="nucleotide sequence ID" value="NC_007973.1"/>
</dbReference>
<dbReference type="SMR" id="Q1LI79"/>
<dbReference type="STRING" id="266264.Rmet_3275"/>
<dbReference type="GeneID" id="60825598"/>
<dbReference type="KEGG" id="rme:Rmet_3275"/>
<dbReference type="eggNOG" id="COG1965">
    <property type="taxonomic scope" value="Bacteria"/>
</dbReference>
<dbReference type="HOGENOM" id="CLU_080880_3_0_4"/>
<dbReference type="Proteomes" id="UP000002429">
    <property type="component" value="Chromosome"/>
</dbReference>
<dbReference type="GO" id="GO:0005829">
    <property type="term" value="C:cytosol"/>
    <property type="evidence" value="ECO:0007669"/>
    <property type="project" value="TreeGrafter"/>
</dbReference>
<dbReference type="GO" id="GO:0008199">
    <property type="term" value="F:ferric iron binding"/>
    <property type="evidence" value="ECO:0007669"/>
    <property type="project" value="InterPro"/>
</dbReference>
<dbReference type="GO" id="GO:0008198">
    <property type="term" value="F:ferrous iron binding"/>
    <property type="evidence" value="ECO:0007669"/>
    <property type="project" value="TreeGrafter"/>
</dbReference>
<dbReference type="GO" id="GO:0016226">
    <property type="term" value="P:iron-sulfur cluster assembly"/>
    <property type="evidence" value="ECO:0007669"/>
    <property type="project" value="UniProtKB-UniRule"/>
</dbReference>
<dbReference type="Gene3D" id="3.30.920.10">
    <property type="entry name" value="Frataxin/CyaY"/>
    <property type="match status" value="1"/>
</dbReference>
<dbReference type="HAMAP" id="MF_00142">
    <property type="entry name" value="CyaY"/>
    <property type="match status" value="1"/>
</dbReference>
<dbReference type="InterPro" id="IPR047584">
    <property type="entry name" value="CyaY"/>
</dbReference>
<dbReference type="InterPro" id="IPR002908">
    <property type="entry name" value="Frataxin/CyaY"/>
</dbReference>
<dbReference type="InterPro" id="IPR036524">
    <property type="entry name" value="Frataxin/CyaY_sf"/>
</dbReference>
<dbReference type="InterPro" id="IPR020895">
    <property type="entry name" value="Frataxin_CS"/>
</dbReference>
<dbReference type="NCBIfam" id="TIGR03421">
    <property type="entry name" value="FeS_CyaY"/>
    <property type="match status" value="1"/>
</dbReference>
<dbReference type="PANTHER" id="PTHR16821">
    <property type="entry name" value="FRATAXIN"/>
    <property type="match status" value="1"/>
</dbReference>
<dbReference type="PANTHER" id="PTHR16821:SF2">
    <property type="entry name" value="FRATAXIN, MITOCHONDRIAL"/>
    <property type="match status" value="1"/>
</dbReference>
<dbReference type="Pfam" id="PF01491">
    <property type="entry name" value="Frataxin_Cyay"/>
    <property type="match status" value="1"/>
</dbReference>
<dbReference type="SMART" id="SM01219">
    <property type="entry name" value="Frataxin_Cyay"/>
    <property type="match status" value="1"/>
</dbReference>
<dbReference type="SUPFAM" id="SSF55387">
    <property type="entry name" value="Frataxin/Nqo15-like"/>
    <property type="match status" value="1"/>
</dbReference>
<dbReference type="PROSITE" id="PS01344">
    <property type="entry name" value="FRATAXIN_1"/>
    <property type="match status" value="1"/>
</dbReference>
<dbReference type="PROSITE" id="PS50810">
    <property type="entry name" value="FRATAXIN_2"/>
    <property type="match status" value="1"/>
</dbReference>
<name>CYAY_CUPMC</name>
<reference key="1">
    <citation type="journal article" date="2010" name="PLoS ONE">
        <title>The complete genome sequence of Cupriavidus metallidurans strain CH34, a master survivalist in harsh and anthropogenic environments.</title>
        <authorList>
            <person name="Janssen P.J."/>
            <person name="Van Houdt R."/>
            <person name="Moors H."/>
            <person name="Monsieurs P."/>
            <person name="Morin N."/>
            <person name="Michaux A."/>
            <person name="Benotmane M.A."/>
            <person name="Leys N."/>
            <person name="Vallaeys T."/>
            <person name="Lapidus A."/>
            <person name="Monchy S."/>
            <person name="Medigue C."/>
            <person name="Taghavi S."/>
            <person name="McCorkle S."/>
            <person name="Dunn J."/>
            <person name="van der Lelie D."/>
            <person name="Mergeay M."/>
        </authorList>
    </citation>
    <scope>NUCLEOTIDE SEQUENCE [LARGE SCALE GENOMIC DNA]</scope>
    <source>
        <strain>ATCC 43123 / DSM 2839 / NBRC 102507 / CH34</strain>
    </source>
</reference>
<protein>
    <recommendedName>
        <fullName evidence="1">Iron-sulfur cluster assembly protein CyaY</fullName>
    </recommendedName>
</protein>